<reference key="1">
    <citation type="journal article" date="2013" name="Toxicon">
        <title>Cloning and characterisation of three novel disintegrin precursors from the venoms of three Atheris species: Atheris chlorechis, Atheris nitschei and Atheris squamigera.</title>
        <authorList>
            <person name="Wang H."/>
            <person name="Chen X."/>
            <person name="Wang L."/>
            <person name="Chen W."/>
            <person name="Zhou M."/>
            <person name="Chen T."/>
            <person name="Shaw C."/>
        </authorList>
    </citation>
    <scope>NUCLEOTIDE SEQUENCE [MRNA]</scope>
    <scope>FUNCTION</scope>
    <scope>MASS SPECTROMETRY</scope>
    <scope>IDENTIFICATION BY MASS SPECTROMETRY</scope>
    <source>
        <tissue>Venom</tissue>
        <tissue>Venom gland</tissue>
    </source>
</reference>
<accession>M5BHN0</accession>
<comment type="function">
    <text evidence="4">Inhibits ADP-induced platelet aggregation in human platelet-rich plasma (IC(50) is 8 uM).</text>
</comment>
<comment type="subunit">
    <text evidence="1">Heterodimer; disulfide-linked.</text>
</comment>
<comment type="subcellular location">
    <subcellularLocation>
        <location>Secreted</location>
    </subcellularLocation>
</comment>
<comment type="mass spectrometry" mass="7071.0" method="MALDI" evidence="4"/>
<comment type="similarity">
    <text evidence="5">Belongs to the disintegrin family. Dimeric disintegrin subfamily.</text>
</comment>
<keyword id="KW-1217">Cell adhesion impairing toxin</keyword>
<keyword id="KW-1015">Disulfide bond</keyword>
<keyword id="KW-1199">Hemostasis impairing toxin</keyword>
<keyword id="KW-1201">Platelet aggregation inhibiting toxin</keyword>
<keyword id="KW-0964">Secreted</keyword>
<keyword id="KW-0732">Signal</keyword>
<keyword id="KW-0800">Toxin</keyword>
<dbReference type="EMBL" id="HF543863">
    <property type="protein sequence ID" value="CCN27115.1"/>
    <property type="molecule type" value="mRNA"/>
</dbReference>
<dbReference type="SMR" id="M5BHN0"/>
<dbReference type="GO" id="GO:0005576">
    <property type="term" value="C:extracellular region"/>
    <property type="evidence" value="ECO:0007669"/>
    <property type="project" value="UniProtKB-SubCell"/>
</dbReference>
<dbReference type="GO" id="GO:0090729">
    <property type="term" value="F:toxin activity"/>
    <property type="evidence" value="ECO:0007669"/>
    <property type="project" value="UniProtKB-KW"/>
</dbReference>
<dbReference type="Gene3D" id="4.10.70.10">
    <property type="entry name" value="Disintegrin domain"/>
    <property type="match status" value="1"/>
</dbReference>
<dbReference type="InterPro" id="IPR018358">
    <property type="entry name" value="Disintegrin_CS"/>
</dbReference>
<dbReference type="InterPro" id="IPR001762">
    <property type="entry name" value="Disintegrin_dom"/>
</dbReference>
<dbReference type="InterPro" id="IPR036436">
    <property type="entry name" value="Disintegrin_dom_sf"/>
</dbReference>
<dbReference type="PANTHER" id="PTHR11905">
    <property type="entry name" value="ADAM A DISINTEGRIN AND METALLOPROTEASE DOMAIN"/>
    <property type="match status" value="1"/>
</dbReference>
<dbReference type="PANTHER" id="PTHR11905:SF159">
    <property type="entry name" value="ADAM METALLOPROTEASE"/>
    <property type="match status" value="1"/>
</dbReference>
<dbReference type="Pfam" id="PF00200">
    <property type="entry name" value="Disintegrin"/>
    <property type="match status" value="1"/>
</dbReference>
<dbReference type="PRINTS" id="PR00289">
    <property type="entry name" value="DISINTEGRIN"/>
</dbReference>
<dbReference type="SMART" id="SM00050">
    <property type="entry name" value="DISIN"/>
    <property type="match status" value="1"/>
</dbReference>
<dbReference type="SUPFAM" id="SSF57552">
    <property type="entry name" value="Blood coagulation inhibitor (disintegrin)"/>
    <property type="match status" value="1"/>
</dbReference>
<dbReference type="PROSITE" id="PS00427">
    <property type="entry name" value="DISINTEGRIN_1"/>
    <property type="match status" value="1"/>
</dbReference>
<dbReference type="PROSITE" id="PS50214">
    <property type="entry name" value="DISINTEGRIN_2"/>
    <property type="match status" value="1"/>
</dbReference>
<name>DID_ATHNI</name>
<evidence type="ECO:0000250" key="1"/>
<evidence type="ECO:0000255" key="2"/>
<evidence type="ECO:0000255" key="3">
    <source>
        <dbReference type="PROSITE-ProRule" id="PRU00068"/>
    </source>
</evidence>
<evidence type="ECO:0000269" key="4">
    <source>
    </source>
</evidence>
<evidence type="ECO:0000305" key="5"/>
<feature type="signal peptide" evidence="2">
    <location>
        <begin position="1"/>
        <end position="20"/>
    </location>
</feature>
<feature type="propeptide" id="PRO_5001124508">
    <location>
        <begin position="21"/>
        <end position="47"/>
    </location>
</feature>
<feature type="chain" id="PRO_5001124507" description="Disintegrin DS-AN">
    <location>
        <begin position="48"/>
        <end position="111"/>
    </location>
</feature>
<feature type="domain" description="Disintegrin" evidence="3">
    <location>
        <begin position="47"/>
        <end position="111"/>
    </location>
</feature>
<feature type="short sequence motif" description="Cell attachment site">
    <location>
        <begin position="89"/>
        <end position="91"/>
    </location>
</feature>
<feature type="disulfide bond" evidence="3">
    <location>
        <begin position="53"/>
        <end position="76"/>
    </location>
</feature>
<feature type="disulfide bond" description="Interchain" evidence="3">
    <location>
        <position position="54"/>
    </location>
</feature>
<feature type="disulfide bond" description="Interchain" evidence="3">
    <location>
        <position position="59"/>
    </location>
</feature>
<feature type="disulfide bond" evidence="3">
    <location>
        <begin position="67"/>
        <end position="73"/>
    </location>
</feature>
<feature type="disulfide bond" evidence="3">
    <location>
        <begin position="72"/>
        <end position="97"/>
    </location>
</feature>
<feature type="disulfide bond" evidence="3">
    <location>
        <begin position="85"/>
        <end position="104"/>
    </location>
</feature>
<sequence length="111" mass="12246">MIQVLLVIICLAVFPYQGSCIILESGNVNDYEIVYPKKLIVLPTGAMNSPHPCCDPVTCKPKKGEHCISGPCCRNCKFMNSGTICKRARGDDMNDYCTGITPDCPRNPYKD</sequence>
<protein>
    <recommendedName>
        <fullName>Disintegrin DS-AN</fullName>
    </recommendedName>
</protein>
<proteinExistence type="evidence at protein level"/>
<organism>
    <name type="scientific">Atheris nitschei</name>
    <name type="common">Great lakes bush viper</name>
    <dbReference type="NCBI Taxonomy" id="110224"/>
    <lineage>
        <taxon>Eukaryota</taxon>
        <taxon>Metazoa</taxon>
        <taxon>Chordata</taxon>
        <taxon>Craniata</taxon>
        <taxon>Vertebrata</taxon>
        <taxon>Euteleostomi</taxon>
        <taxon>Lepidosauria</taxon>
        <taxon>Squamata</taxon>
        <taxon>Bifurcata</taxon>
        <taxon>Unidentata</taxon>
        <taxon>Episquamata</taxon>
        <taxon>Toxicofera</taxon>
        <taxon>Serpentes</taxon>
        <taxon>Colubroidea</taxon>
        <taxon>Viperidae</taxon>
        <taxon>Viperinae</taxon>
        <taxon>Atheris</taxon>
    </lineage>
</organism>